<reference key="1">
    <citation type="journal article" date="2005" name="Nucleic Acids Res.">
        <title>Genome dynamics and diversity of Shigella species, the etiologic agents of bacillary dysentery.</title>
        <authorList>
            <person name="Yang F."/>
            <person name="Yang J."/>
            <person name="Zhang X."/>
            <person name="Chen L."/>
            <person name="Jiang Y."/>
            <person name="Yan Y."/>
            <person name="Tang X."/>
            <person name="Wang J."/>
            <person name="Xiong Z."/>
            <person name="Dong J."/>
            <person name="Xue Y."/>
            <person name="Zhu Y."/>
            <person name="Xu X."/>
            <person name="Sun L."/>
            <person name="Chen S."/>
            <person name="Nie H."/>
            <person name="Peng J."/>
            <person name="Xu J."/>
            <person name="Wang Y."/>
            <person name="Yuan Z."/>
            <person name="Wen Y."/>
            <person name="Yao Z."/>
            <person name="Shen Y."/>
            <person name="Qiang B."/>
            <person name="Hou Y."/>
            <person name="Yu J."/>
            <person name="Jin Q."/>
        </authorList>
    </citation>
    <scope>NUCLEOTIDE SEQUENCE [LARGE SCALE GENOMIC DNA]</scope>
    <source>
        <strain>Sb227</strain>
    </source>
</reference>
<accession>Q31YT2</accession>
<sequence length="248" mass="27588">MSFVVIIPARYASTRLPGKPLVDINGKPMIVHVLERARESGAERIIVATDHEDVARAVEAAGGEVCMTRADHQSGTERLAEVVEKCAFSDDTVIVNVQGDEPMIPATIIRQVADNLAQRQVGMATLAVPIHNAEEAFNPNAVKVVLDAEGYALYFSRATIPWDRDRFAEGLETVGDNFLRHLGIYGYRAGFIRRYVNWQASPLEHIEMLEQLRVLWYGEKIHVAVAQEVPGTGVDTPEDLERVRAEMR</sequence>
<protein>
    <recommendedName>
        <fullName evidence="1">3-deoxy-manno-octulosonate cytidylyltransferase</fullName>
        <ecNumber evidence="1">2.7.7.38</ecNumber>
    </recommendedName>
    <alternativeName>
        <fullName evidence="1">CMP-2-keto-3-deoxyoctulosonic acid synthase</fullName>
        <shortName evidence="1">CKS</shortName>
        <shortName evidence="1">CMP-KDO synthase</shortName>
    </alternativeName>
</protein>
<name>KDSB_SHIBS</name>
<gene>
    <name evidence="1" type="primary">kdsB</name>
    <name type="ordered locus">SBO_2206</name>
</gene>
<organism>
    <name type="scientific">Shigella boydii serotype 4 (strain Sb227)</name>
    <dbReference type="NCBI Taxonomy" id="300268"/>
    <lineage>
        <taxon>Bacteria</taxon>
        <taxon>Pseudomonadati</taxon>
        <taxon>Pseudomonadota</taxon>
        <taxon>Gammaproteobacteria</taxon>
        <taxon>Enterobacterales</taxon>
        <taxon>Enterobacteriaceae</taxon>
        <taxon>Shigella</taxon>
    </lineage>
</organism>
<feature type="chain" id="PRO_1000003381" description="3-deoxy-manno-octulosonate cytidylyltransferase">
    <location>
        <begin position="1"/>
        <end position="248"/>
    </location>
</feature>
<comment type="function">
    <text evidence="1">Activates KDO (a required 8-carbon sugar) for incorporation into bacterial lipopolysaccharide in Gram-negative bacteria.</text>
</comment>
<comment type="catalytic activity">
    <reaction evidence="1">
        <text>3-deoxy-alpha-D-manno-oct-2-ulosonate + CTP = CMP-3-deoxy-beta-D-manno-octulosonate + diphosphate</text>
        <dbReference type="Rhea" id="RHEA:23448"/>
        <dbReference type="ChEBI" id="CHEBI:33019"/>
        <dbReference type="ChEBI" id="CHEBI:37563"/>
        <dbReference type="ChEBI" id="CHEBI:85986"/>
        <dbReference type="ChEBI" id="CHEBI:85987"/>
        <dbReference type="EC" id="2.7.7.38"/>
    </reaction>
</comment>
<comment type="pathway">
    <text evidence="1">Nucleotide-sugar biosynthesis; CMP-3-deoxy-D-manno-octulosonate biosynthesis; CMP-3-deoxy-D-manno-octulosonate from 3-deoxy-D-manno-octulosonate and CTP: step 1/1.</text>
</comment>
<comment type="pathway">
    <text evidence="1">Bacterial outer membrane biogenesis; lipopolysaccharide biosynthesis.</text>
</comment>
<comment type="subcellular location">
    <subcellularLocation>
        <location evidence="1">Cytoplasm</location>
    </subcellularLocation>
</comment>
<comment type="similarity">
    <text evidence="1">Belongs to the KdsB family.</text>
</comment>
<proteinExistence type="inferred from homology"/>
<evidence type="ECO:0000255" key="1">
    <source>
        <dbReference type="HAMAP-Rule" id="MF_00057"/>
    </source>
</evidence>
<dbReference type="EC" id="2.7.7.38" evidence="1"/>
<dbReference type="EMBL" id="CP000036">
    <property type="protein sequence ID" value="ABB66776.1"/>
    <property type="molecule type" value="Genomic_DNA"/>
</dbReference>
<dbReference type="RefSeq" id="WP_000011601.1">
    <property type="nucleotide sequence ID" value="NC_007613.1"/>
</dbReference>
<dbReference type="SMR" id="Q31YT2"/>
<dbReference type="GeneID" id="93776497"/>
<dbReference type="KEGG" id="sbo:SBO_2206"/>
<dbReference type="HOGENOM" id="CLU_065038_1_0_6"/>
<dbReference type="UniPathway" id="UPA00030"/>
<dbReference type="UniPathway" id="UPA00358">
    <property type="reaction ID" value="UER00476"/>
</dbReference>
<dbReference type="Proteomes" id="UP000007067">
    <property type="component" value="Chromosome"/>
</dbReference>
<dbReference type="GO" id="GO:0005829">
    <property type="term" value="C:cytosol"/>
    <property type="evidence" value="ECO:0007669"/>
    <property type="project" value="TreeGrafter"/>
</dbReference>
<dbReference type="GO" id="GO:0008690">
    <property type="term" value="F:3-deoxy-manno-octulosonate cytidylyltransferase activity"/>
    <property type="evidence" value="ECO:0007669"/>
    <property type="project" value="UniProtKB-UniRule"/>
</dbReference>
<dbReference type="GO" id="GO:0033468">
    <property type="term" value="P:CMP-keto-3-deoxy-D-manno-octulosonic acid biosynthetic process"/>
    <property type="evidence" value="ECO:0007669"/>
    <property type="project" value="UniProtKB-UniRule"/>
</dbReference>
<dbReference type="GO" id="GO:0009103">
    <property type="term" value="P:lipopolysaccharide biosynthetic process"/>
    <property type="evidence" value="ECO:0007669"/>
    <property type="project" value="UniProtKB-UniRule"/>
</dbReference>
<dbReference type="CDD" id="cd02517">
    <property type="entry name" value="CMP-KDO-Synthetase"/>
    <property type="match status" value="1"/>
</dbReference>
<dbReference type="FunFam" id="3.90.550.10:FF:000011">
    <property type="entry name" value="3-deoxy-manno-octulosonate cytidylyltransferase"/>
    <property type="match status" value="1"/>
</dbReference>
<dbReference type="Gene3D" id="3.90.550.10">
    <property type="entry name" value="Spore Coat Polysaccharide Biosynthesis Protein SpsA, Chain A"/>
    <property type="match status" value="1"/>
</dbReference>
<dbReference type="HAMAP" id="MF_00057">
    <property type="entry name" value="KdsB"/>
    <property type="match status" value="1"/>
</dbReference>
<dbReference type="InterPro" id="IPR003329">
    <property type="entry name" value="Cytidylyl_trans"/>
</dbReference>
<dbReference type="InterPro" id="IPR004528">
    <property type="entry name" value="KdsB"/>
</dbReference>
<dbReference type="InterPro" id="IPR029044">
    <property type="entry name" value="Nucleotide-diphossugar_trans"/>
</dbReference>
<dbReference type="NCBIfam" id="TIGR00466">
    <property type="entry name" value="kdsB"/>
    <property type="match status" value="1"/>
</dbReference>
<dbReference type="NCBIfam" id="NF003950">
    <property type="entry name" value="PRK05450.1-3"/>
    <property type="match status" value="1"/>
</dbReference>
<dbReference type="NCBIfam" id="NF003952">
    <property type="entry name" value="PRK05450.1-5"/>
    <property type="match status" value="1"/>
</dbReference>
<dbReference type="NCBIfam" id="NF009905">
    <property type="entry name" value="PRK13368.1"/>
    <property type="match status" value="1"/>
</dbReference>
<dbReference type="PANTHER" id="PTHR42866">
    <property type="entry name" value="3-DEOXY-MANNO-OCTULOSONATE CYTIDYLYLTRANSFERASE"/>
    <property type="match status" value="1"/>
</dbReference>
<dbReference type="PANTHER" id="PTHR42866:SF2">
    <property type="entry name" value="3-DEOXY-MANNO-OCTULOSONATE CYTIDYLYLTRANSFERASE, MITOCHONDRIAL"/>
    <property type="match status" value="1"/>
</dbReference>
<dbReference type="Pfam" id="PF02348">
    <property type="entry name" value="CTP_transf_3"/>
    <property type="match status" value="1"/>
</dbReference>
<dbReference type="SUPFAM" id="SSF53448">
    <property type="entry name" value="Nucleotide-diphospho-sugar transferases"/>
    <property type="match status" value="1"/>
</dbReference>
<keyword id="KW-0963">Cytoplasm</keyword>
<keyword id="KW-0448">Lipopolysaccharide biosynthesis</keyword>
<keyword id="KW-0548">Nucleotidyltransferase</keyword>
<keyword id="KW-0808">Transferase</keyword>